<keyword id="KW-0997">Cell inner membrane</keyword>
<keyword id="KW-1003">Cell membrane</keyword>
<keyword id="KW-0378">Hydrolase</keyword>
<keyword id="KW-0472">Membrane</keyword>
<keyword id="KW-0479">Metal-binding</keyword>
<keyword id="KW-0489">Methyltransferase</keyword>
<keyword id="KW-0511">Multifunctional enzyme</keyword>
<keyword id="KW-0645">Protease</keyword>
<keyword id="KW-0949">S-adenosyl-L-methionine</keyword>
<keyword id="KW-0808">Transferase</keyword>
<keyword id="KW-0812">Transmembrane</keyword>
<keyword id="KW-1133">Transmembrane helix</keyword>
<keyword id="KW-0862">Zinc</keyword>
<comment type="function">
    <text evidence="1">Plays an essential role in type IV pili and type II pseudopili formation by proteolytically removing the leader sequence from substrate proteins and subsequently monomethylating the alpha-amino group of the newly exposed N-terminal phenylalanine.</text>
</comment>
<comment type="catalytic activity">
    <reaction evidence="1">
        <text>Typically cleaves a -Gly-|-Phe- bond to release an N-terminal, basic peptide of 5-8 residues from type IV prepilin, and then N-methylates the new N-terminal amino group, the methyl donor being S-adenosyl-L-methionine.</text>
        <dbReference type="EC" id="3.4.23.43"/>
    </reaction>
</comment>
<comment type="cofactor">
    <cofactor evidence="1">
        <name>Zn(2+)</name>
        <dbReference type="ChEBI" id="CHEBI:29105"/>
    </cofactor>
    <text evidence="1">Zinc is required for the N-terminal methylation of the mature pilin, but not for signal peptide cleavage.</text>
</comment>
<comment type="subcellular location">
    <subcellularLocation>
        <location evidence="1">Cell inner membrane</location>
        <topology evidence="1">Multi-pass membrane protein</topology>
    </subcellularLocation>
</comment>
<comment type="similarity">
    <text evidence="3">Belongs to the peptidase A24 family.</text>
</comment>
<dbReference type="EC" id="3.4.23.43" evidence="1"/>
<dbReference type="EC" id="2.1.1.-" evidence="1"/>
<dbReference type="EMBL" id="AJ132364">
    <property type="protein sequence ID" value="CAA10649.1"/>
    <property type="molecule type" value="Genomic_DNA"/>
</dbReference>
<dbReference type="MEROPS" id="A24.001"/>
<dbReference type="eggNOG" id="COG1989">
    <property type="taxonomic scope" value="Bacteria"/>
</dbReference>
<dbReference type="GO" id="GO:0005886">
    <property type="term" value="C:plasma membrane"/>
    <property type="evidence" value="ECO:0007669"/>
    <property type="project" value="UniProtKB-SubCell"/>
</dbReference>
<dbReference type="GO" id="GO:0004190">
    <property type="term" value="F:aspartic-type endopeptidase activity"/>
    <property type="evidence" value="ECO:0007669"/>
    <property type="project" value="UniProtKB-EC"/>
</dbReference>
<dbReference type="GO" id="GO:0046872">
    <property type="term" value="F:metal ion binding"/>
    <property type="evidence" value="ECO:0007669"/>
    <property type="project" value="UniProtKB-KW"/>
</dbReference>
<dbReference type="GO" id="GO:0008168">
    <property type="term" value="F:methyltransferase activity"/>
    <property type="evidence" value="ECO:0007669"/>
    <property type="project" value="UniProtKB-KW"/>
</dbReference>
<dbReference type="GO" id="GO:0032259">
    <property type="term" value="P:methylation"/>
    <property type="evidence" value="ECO:0007669"/>
    <property type="project" value="UniProtKB-KW"/>
</dbReference>
<dbReference type="GO" id="GO:0006465">
    <property type="term" value="P:signal peptide processing"/>
    <property type="evidence" value="ECO:0007669"/>
    <property type="project" value="TreeGrafter"/>
</dbReference>
<dbReference type="FunFam" id="1.20.120.1220:FF:000001">
    <property type="entry name" value="Type 4 prepilin-like proteins leader peptide-processing enzyme"/>
    <property type="match status" value="1"/>
</dbReference>
<dbReference type="Gene3D" id="1.20.120.1220">
    <property type="match status" value="1"/>
</dbReference>
<dbReference type="InterPro" id="IPR014032">
    <property type="entry name" value="Peptidase_A24A_bac"/>
</dbReference>
<dbReference type="InterPro" id="IPR000045">
    <property type="entry name" value="Prepilin_IV_endopep_pep"/>
</dbReference>
<dbReference type="InterPro" id="IPR010627">
    <property type="entry name" value="Prepilin_pept_A24_N"/>
</dbReference>
<dbReference type="InterPro" id="IPR050882">
    <property type="entry name" value="Prepilin_peptidase/N-MTase"/>
</dbReference>
<dbReference type="PANTHER" id="PTHR30487:SF0">
    <property type="entry name" value="PREPILIN LEADER PEPTIDASE_N-METHYLTRANSFERASE-RELATED"/>
    <property type="match status" value="1"/>
</dbReference>
<dbReference type="PANTHER" id="PTHR30487">
    <property type="entry name" value="TYPE 4 PREPILIN-LIKE PROTEINS LEADER PEPTIDE-PROCESSING ENZYME"/>
    <property type="match status" value="1"/>
</dbReference>
<dbReference type="Pfam" id="PF06750">
    <property type="entry name" value="A24_N_bact"/>
    <property type="match status" value="1"/>
</dbReference>
<dbReference type="Pfam" id="PF01478">
    <property type="entry name" value="Peptidase_A24"/>
    <property type="match status" value="1"/>
</dbReference>
<dbReference type="PRINTS" id="PR00864">
    <property type="entry name" value="PREPILNPTASE"/>
</dbReference>
<proteinExistence type="inferred from homology"/>
<organism>
    <name type="scientific">Stutzerimonas stutzeri</name>
    <name type="common">Pseudomonas stutzeri</name>
    <dbReference type="NCBI Taxonomy" id="316"/>
    <lineage>
        <taxon>Bacteria</taxon>
        <taxon>Pseudomonadati</taxon>
        <taxon>Pseudomonadota</taxon>
        <taxon>Gammaproteobacteria</taxon>
        <taxon>Pseudomonadales</taxon>
        <taxon>Pseudomonadaceae</taxon>
        <taxon>Stutzerimonas</taxon>
    </lineage>
</organism>
<reference key="1">
    <citation type="submission" date="1999-01" db="EMBL/GenBank/DDBJ databases">
        <authorList>
            <person name="Graupner S."/>
            <person name="Lorenz M.G."/>
            <person name="Wackernagel W."/>
        </authorList>
    </citation>
    <scope>NUCLEOTIDE SEQUENCE [GENOMIC DNA]</scope>
    <source>
        <strain>DSM 10701 / IAM 15110 / JCM 21571 / JM300</strain>
    </source>
</reference>
<evidence type="ECO:0000250" key="1">
    <source>
        <dbReference type="UniProtKB" id="P22610"/>
    </source>
</evidence>
<evidence type="ECO:0000255" key="2"/>
<evidence type="ECO:0000305" key="3"/>
<accession>Q9ZEL6</accession>
<protein>
    <recommendedName>
        <fullName>Prepilin leader peptidase/N-methyltransferase</fullName>
    </recommendedName>
    <domain>
        <recommendedName>
            <fullName>Leader peptidase</fullName>
            <ecNumber evidence="1">3.4.23.43</ecNumber>
        </recommendedName>
        <alternativeName>
            <fullName>Prepilin peptidase</fullName>
        </alternativeName>
    </domain>
    <domain>
        <recommendedName>
            <fullName>N-methyltransferase</fullName>
            <ecNumber evidence="1">2.1.1.-</ecNumber>
        </recommendedName>
    </domain>
</protein>
<name>LEP4_STUST</name>
<sequence length="289" mass="31818">MTPVEFLASNPLAFVLCALVLGLLVGSFLNVVIHRLPIMMQRDWQSQAREFLELPAEPAGAAFNLFLPHSRCPHCDHQIRAWENIPLISWLALRGKCSACKASISKRYPLVELACGLLSGYVAWHFGFSWQAGAMLLLTWGLLAMSMIDVDHQLLPDSLVLPLLWLGLIINSFGLFASLEDALWGAVVGYLALWSVYWLFKLVTGKEGMGYGDFKLLAMLGAWGGWQVLPLTILLSSVVGAVLGTVMLRMQKAESGTPIPFGPYLAIAGWVALLWGDQITASYLQFARL</sequence>
<gene>
    <name type="primary">pilD</name>
</gene>
<feature type="chain" id="PRO_0000192627" description="Prepilin leader peptidase/N-methyltransferase">
    <location>
        <begin position="1"/>
        <end position="289"/>
    </location>
</feature>
<feature type="transmembrane region" description="Helical" evidence="2">
    <location>
        <begin position="13"/>
        <end position="33"/>
    </location>
</feature>
<feature type="transmembrane region" description="Helical" evidence="2">
    <location>
        <begin position="128"/>
        <end position="148"/>
    </location>
</feature>
<feature type="transmembrane region" description="Helical" evidence="2">
    <location>
        <begin position="159"/>
        <end position="179"/>
    </location>
</feature>
<feature type="transmembrane region" description="Helical" evidence="2">
    <location>
        <begin position="183"/>
        <end position="203"/>
    </location>
</feature>
<feature type="transmembrane region" description="Helical" evidence="2">
    <location>
        <begin position="228"/>
        <end position="248"/>
    </location>
</feature>
<feature type="transmembrane region" description="Helical" evidence="2">
    <location>
        <begin position="256"/>
        <end position="276"/>
    </location>
</feature>
<feature type="binding site" evidence="1">
    <location>
        <position position="72"/>
    </location>
    <ligand>
        <name>Zn(2+)</name>
        <dbReference type="ChEBI" id="CHEBI:29105"/>
    </ligand>
</feature>
<feature type="binding site" evidence="1">
    <location>
        <position position="75"/>
    </location>
    <ligand>
        <name>Zn(2+)</name>
        <dbReference type="ChEBI" id="CHEBI:29105"/>
    </ligand>
</feature>
<feature type="binding site" evidence="1">
    <location>
        <position position="97"/>
    </location>
    <ligand>
        <name>Zn(2+)</name>
        <dbReference type="ChEBI" id="CHEBI:29105"/>
    </ligand>
</feature>
<feature type="binding site" evidence="1">
    <location>
        <position position="100"/>
    </location>
    <ligand>
        <name>Zn(2+)</name>
        <dbReference type="ChEBI" id="CHEBI:29105"/>
    </ligand>
</feature>